<protein>
    <recommendedName>
        <fullName evidence="1">Chaperone protein DnaK</fullName>
    </recommendedName>
    <alternativeName>
        <fullName evidence="1">HSP70</fullName>
    </alternativeName>
    <alternativeName>
        <fullName evidence="1">Heat shock 70 kDa protein</fullName>
    </alternativeName>
    <alternativeName>
        <fullName evidence="1">Heat shock protein 70</fullName>
    </alternativeName>
</protein>
<feature type="chain" id="PRO_1000059618" description="Chaperone protein DnaK">
    <location>
        <begin position="1"/>
        <end position="644"/>
    </location>
</feature>
<feature type="region of interest" description="Disordered" evidence="2">
    <location>
        <begin position="589"/>
        <end position="644"/>
    </location>
</feature>
<feature type="compositionally biased region" description="Low complexity" evidence="2">
    <location>
        <begin position="604"/>
        <end position="619"/>
    </location>
</feature>
<feature type="modified residue" description="Phosphothreonine; by autocatalysis" evidence="1">
    <location>
        <position position="199"/>
    </location>
</feature>
<organism>
    <name type="scientific">Nitrosospira multiformis (strain ATCC 25196 / NCIMB 11849 / C 71)</name>
    <dbReference type="NCBI Taxonomy" id="323848"/>
    <lineage>
        <taxon>Bacteria</taxon>
        <taxon>Pseudomonadati</taxon>
        <taxon>Pseudomonadota</taxon>
        <taxon>Betaproteobacteria</taxon>
        <taxon>Nitrosomonadales</taxon>
        <taxon>Nitrosomonadaceae</taxon>
        <taxon>Nitrosospira</taxon>
    </lineage>
</organism>
<reference key="1">
    <citation type="submission" date="2005-08" db="EMBL/GenBank/DDBJ databases">
        <title>Complete sequence of chromosome 1 of Nitrosospira multiformis ATCC 25196.</title>
        <authorList>
            <person name="Copeland A."/>
            <person name="Lucas S."/>
            <person name="Lapidus A."/>
            <person name="Barry K."/>
            <person name="Detter J.C."/>
            <person name="Glavina T."/>
            <person name="Hammon N."/>
            <person name="Israni S."/>
            <person name="Pitluck S."/>
            <person name="Chain P."/>
            <person name="Malfatti S."/>
            <person name="Shin M."/>
            <person name="Vergez L."/>
            <person name="Schmutz J."/>
            <person name="Larimer F."/>
            <person name="Land M."/>
            <person name="Hauser L."/>
            <person name="Kyrpides N."/>
            <person name="Lykidis A."/>
            <person name="Richardson P."/>
        </authorList>
    </citation>
    <scope>NUCLEOTIDE SEQUENCE [LARGE SCALE GENOMIC DNA]</scope>
    <source>
        <strain>ATCC 25196 / NCIMB 11849 / C 71</strain>
    </source>
</reference>
<evidence type="ECO:0000255" key="1">
    <source>
        <dbReference type="HAMAP-Rule" id="MF_00332"/>
    </source>
</evidence>
<evidence type="ECO:0000256" key="2">
    <source>
        <dbReference type="SAM" id="MobiDB-lite"/>
    </source>
</evidence>
<name>DNAK_NITMU</name>
<accession>Q2Y6U0</accession>
<sequence length="644" mass="69779">MGKIIGIDLGTTNSCVAVMESGKPKVIENSEGARTTPSIVAYTEDGEILVGASAKRQAVTNPKNTLFAVKRLIGRRFNEEMVQRDIKMVPYTIIKADNNDAWIEVRGKKVAPPEVSAQVLMKMKKTAEDYLGEPVTEAVITVPAYFNDSQRQATKDAGRIAGLEVKRIINEPTAAALAFGMDKKEGDRKIAVYDLGGGTFDISIIEIAEVEGEHQFEVLATNGDTFLGGEDFDARIIEYLVDEFKKENGIDLKKDMLALQRLKDSAEKAKIELSSSQQTEVNLPYITADASGPKHLAVRITRAKLESLVEDLITRTVEPCRIAIKDAGIKISDIDDVILVGGQTRMPKVQEKVKEIFAKEPRKDVNPDEAVAVGAAIQGGVLQGAVKDVLLLDVTPLSLGIETLGGVMTKLIQKNTTIPTKANQVFSTADDNQTAVTIHVLQGEREMASGNKSLGQFNLADIPPAPRGMPQIEVTFDIDSNGILHVSAKDKATGKESKIKIQASSGLSEEEVQRMVKDAEAHAEEDHKAMELVTARNQCDAMIHSVQKTMKEHGDKLADEEKSKIESALKEAEDALKSGDKETIEAKTQALAEASHKLAEKMYSQGQGPQAGPGEEPSGQSGGTEKPVEGEVVDAEFEEVKNKK</sequence>
<keyword id="KW-0067">ATP-binding</keyword>
<keyword id="KW-0143">Chaperone</keyword>
<keyword id="KW-0547">Nucleotide-binding</keyword>
<keyword id="KW-0597">Phosphoprotein</keyword>
<keyword id="KW-1185">Reference proteome</keyword>
<keyword id="KW-0346">Stress response</keyword>
<proteinExistence type="inferred from homology"/>
<gene>
    <name evidence="1" type="primary">dnaK</name>
    <name type="ordered locus">Nmul_A2239</name>
</gene>
<dbReference type="EMBL" id="CP000103">
    <property type="protein sequence ID" value="ABB75531.1"/>
    <property type="molecule type" value="Genomic_DNA"/>
</dbReference>
<dbReference type="RefSeq" id="WP_011381537.1">
    <property type="nucleotide sequence ID" value="NC_007614.1"/>
</dbReference>
<dbReference type="SMR" id="Q2Y6U0"/>
<dbReference type="STRING" id="323848.Nmul_A2239"/>
<dbReference type="KEGG" id="nmu:Nmul_A2239"/>
<dbReference type="eggNOG" id="COG0443">
    <property type="taxonomic scope" value="Bacteria"/>
</dbReference>
<dbReference type="HOGENOM" id="CLU_005965_2_1_4"/>
<dbReference type="OrthoDB" id="9766019at2"/>
<dbReference type="Proteomes" id="UP000002718">
    <property type="component" value="Chromosome"/>
</dbReference>
<dbReference type="GO" id="GO:0005524">
    <property type="term" value="F:ATP binding"/>
    <property type="evidence" value="ECO:0007669"/>
    <property type="project" value="UniProtKB-UniRule"/>
</dbReference>
<dbReference type="GO" id="GO:0140662">
    <property type="term" value="F:ATP-dependent protein folding chaperone"/>
    <property type="evidence" value="ECO:0007669"/>
    <property type="project" value="InterPro"/>
</dbReference>
<dbReference type="GO" id="GO:0051082">
    <property type="term" value="F:unfolded protein binding"/>
    <property type="evidence" value="ECO:0007669"/>
    <property type="project" value="InterPro"/>
</dbReference>
<dbReference type="CDD" id="cd10234">
    <property type="entry name" value="ASKHA_NBD_HSP70_DnaK-like"/>
    <property type="match status" value="1"/>
</dbReference>
<dbReference type="FunFam" id="2.60.34.10:FF:000014">
    <property type="entry name" value="Chaperone protein DnaK HSP70"/>
    <property type="match status" value="1"/>
</dbReference>
<dbReference type="FunFam" id="1.20.1270.10:FF:000001">
    <property type="entry name" value="Molecular chaperone DnaK"/>
    <property type="match status" value="1"/>
</dbReference>
<dbReference type="FunFam" id="3.30.420.40:FF:000004">
    <property type="entry name" value="Molecular chaperone DnaK"/>
    <property type="match status" value="1"/>
</dbReference>
<dbReference type="FunFam" id="3.90.640.10:FF:000003">
    <property type="entry name" value="Molecular chaperone DnaK"/>
    <property type="match status" value="1"/>
</dbReference>
<dbReference type="Gene3D" id="1.20.1270.10">
    <property type="match status" value="1"/>
</dbReference>
<dbReference type="Gene3D" id="3.30.420.40">
    <property type="match status" value="2"/>
</dbReference>
<dbReference type="Gene3D" id="3.90.640.10">
    <property type="entry name" value="Actin, Chain A, domain 4"/>
    <property type="match status" value="1"/>
</dbReference>
<dbReference type="Gene3D" id="2.60.34.10">
    <property type="entry name" value="Substrate Binding Domain Of DNAk, Chain A, domain 1"/>
    <property type="match status" value="1"/>
</dbReference>
<dbReference type="HAMAP" id="MF_00332">
    <property type="entry name" value="DnaK"/>
    <property type="match status" value="1"/>
</dbReference>
<dbReference type="InterPro" id="IPR043129">
    <property type="entry name" value="ATPase_NBD"/>
</dbReference>
<dbReference type="InterPro" id="IPR012725">
    <property type="entry name" value="Chaperone_DnaK"/>
</dbReference>
<dbReference type="InterPro" id="IPR018181">
    <property type="entry name" value="Heat_shock_70_CS"/>
</dbReference>
<dbReference type="InterPro" id="IPR029048">
    <property type="entry name" value="HSP70_C_sf"/>
</dbReference>
<dbReference type="InterPro" id="IPR029047">
    <property type="entry name" value="HSP70_peptide-bd_sf"/>
</dbReference>
<dbReference type="InterPro" id="IPR013126">
    <property type="entry name" value="Hsp_70_fam"/>
</dbReference>
<dbReference type="NCBIfam" id="NF001413">
    <property type="entry name" value="PRK00290.1"/>
    <property type="match status" value="1"/>
</dbReference>
<dbReference type="NCBIfam" id="NF003520">
    <property type="entry name" value="PRK05183.1"/>
    <property type="match status" value="1"/>
</dbReference>
<dbReference type="NCBIfam" id="TIGR02350">
    <property type="entry name" value="prok_dnaK"/>
    <property type="match status" value="1"/>
</dbReference>
<dbReference type="PANTHER" id="PTHR19375">
    <property type="entry name" value="HEAT SHOCK PROTEIN 70KDA"/>
    <property type="match status" value="1"/>
</dbReference>
<dbReference type="Pfam" id="PF00012">
    <property type="entry name" value="HSP70"/>
    <property type="match status" value="1"/>
</dbReference>
<dbReference type="PRINTS" id="PR00301">
    <property type="entry name" value="HEATSHOCK70"/>
</dbReference>
<dbReference type="SUPFAM" id="SSF53067">
    <property type="entry name" value="Actin-like ATPase domain"/>
    <property type="match status" value="2"/>
</dbReference>
<dbReference type="SUPFAM" id="SSF100934">
    <property type="entry name" value="Heat shock protein 70kD (HSP70), C-terminal subdomain"/>
    <property type="match status" value="1"/>
</dbReference>
<dbReference type="SUPFAM" id="SSF100920">
    <property type="entry name" value="Heat shock protein 70kD (HSP70), peptide-binding domain"/>
    <property type="match status" value="1"/>
</dbReference>
<dbReference type="PROSITE" id="PS00297">
    <property type="entry name" value="HSP70_1"/>
    <property type="match status" value="1"/>
</dbReference>
<dbReference type="PROSITE" id="PS00329">
    <property type="entry name" value="HSP70_2"/>
    <property type="match status" value="1"/>
</dbReference>
<dbReference type="PROSITE" id="PS01036">
    <property type="entry name" value="HSP70_3"/>
    <property type="match status" value="1"/>
</dbReference>
<comment type="function">
    <text evidence="1">Acts as a chaperone.</text>
</comment>
<comment type="induction">
    <text evidence="1">By stress conditions e.g. heat shock.</text>
</comment>
<comment type="similarity">
    <text evidence="1">Belongs to the heat shock protein 70 family.</text>
</comment>